<sequence length="1259" mass="146939">MERDLYGDMADQPIPVGQGVQIRFINDLKENGKPRGKRSKQDSYGVAVRVQGIDGQPFVVLNSGDKAKSSYDYDRHYSERSSTLDTAYSQSSRESAWSRGSQKKTDNGEYPSLGYRSATSQQSTSASNKTNKNGLSTSSFSNQSSEDIDTKPLSSVDSLITKFDVKGQVRGRTARRSQALKDERKRSQSLDGRKNYQDTADSREISLQQQNEVPARRETVSSANRSFARQSLEREDINKTRLTKEWLDQGGEEPVIVKQQRSVQSEFQLKSTPDLLRDQQADGSDPTREMIFSILRDGSTENENNLRKKTSILLEKFPSLQAQPGEDTRSLGSQKKELERKVAELQRQLDDEMKQRMKLESSQGRPKAGMQRLEIQLEESKEECSRLKDLYDKKKNELNAVSQELMEVRMGKEQVETKLRAMEDKLMDSKEELSHLRAKGGTSPDKLALMKELEEVQDELDEVLQIRQKQEELLRQKDRELTALKGALKDEVANHDKDLDRVREQYQNDVQQLRKNMENVSQDQLSLETERQKINQVVRNLQRELEESSDEINQWKEMFQKNKEELRSTKQELLQMKMEKEESEDELKETKDRFSLLQSELEQAKKGSVDPGELASVRKELQRVQDQLKQLSVDKQKVEENLHQRERELSALKGALKEEVAGRGRETERLREQLQSEVVQFKKDNENLGRESQRIQDQLKQVLLEKQRHEEAVHQRERELSALKGALKDEVSGRDREAERLRAQFEQDAMQTKRSYEELVKINKRLESEKVDLERVRQVIENNLQESREENDDLRRKILGLEAQLKETNTFCDDLQRAESRLKDKITKLETERKRMEDTLGEAADQEQELAFVKRDLGNKLEEAQRSLKRLSLEYEELQECYQEEMKQKDHLKKTKNELEEQKRLLDKSMDKLTRELDNMSNESRGSLQVLQSQLEEFREKSRREIGEAQKQAKEKTAEAERHQFNSSRMQEEVQKLKLALQELQVEKETVELDKQMVTQRLQNLEQDTESKKRVQDDRSRQVKVLEDKLKRMEAELDEEKNTVELLSDRINRSREQMEQQRAELMQERARGQDLECDKISLERQNKDLKGRLANMEGQQKPSVNVSHLEAKLQDIQERLQSEEREKATLLSTNRKLERKLKELNIQLEDERLHVNDQKDQLNLRVKALKRQVDEAEEEIERLEGLRKKAVREMEEQQELNEQLQTRLKTMEKESKRKPIRPAHNDDDDLSSDGEYGGSYDPSSITSLLTESNLQTSSC</sequence>
<accession>B1WB65</accession>
<organism>
    <name type="scientific">Xenopus tropicalis</name>
    <name type="common">Western clawed frog</name>
    <name type="synonym">Silurana tropicalis</name>
    <dbReference type="NCBI Taxonomy" id="8364"/>
    <lineage>
        <taxon>Eukaryota</taxon>
        <taxon>Metazoa</taxon>
        <taxon>Chordata</taxon>
        <taxon>Craniata</taxon>
        <taxon>Vertebrata</taxon>
        <taxon>Euteleostomi</taxon>
        <taxon>Amphibia</taxon>
        <taxon>Batrachia</taxon>
        <taxon>Anura</taxon>
        <taxon>Pipoidea</taxon>
        <taxon>Pipidae</taxon>
        <taxon>Xenopodinae</taxon>
        <taxon>Xenopus</taxon>
        <taxon>Silurana</taxon>
    </lineage>
</organism>
<gene>
    <name evidence="3" type="primary">cgn</name>
</gene>
<protein>
    <recommendedName>
        <fullName evidence="3">Cingulin</fullName>
    </recommendedName>
</protein>
<evidence type="ECO:0000250" key="1"/>
<evidence type="ECO:0000250" key="2">
    <source>
        <dbReference type="UniProtKB" id="P59242"/>
    </source>
</evidence>
<evidence type="ECO:0000250" key="3">
    <source>
        <dbReference type="UniProtKB" id="Q9P2M7"/>
    </source>
</evidence>
<evidence type="ECO:0000250" key="4">
    <source>
        <dbReference type="UniProtKB" id="Q9PTD7"/>
    </source>
</evidence>
<evidence type="ECO:0000255" key="5"/>
<evidence type="ECO:0000256" key="6">
    <source>
        <dbReference type="SAM" id="MobiDB-lite"/>
    </source>
</evidence>
<evidence type="ECO:0000305" key="7"/>
<dbReference type="EMBL" id="BC161633">
    <property type="protein sequence ID" value="AAI61633.1"/>
    <property type="status" value="ALT_INIT"/>
    <property type="molecule type" value="mRNA"/>
</dbReference>
<dbReference type="RefSeq" id="NP_001120598.1">
    <property type="nucleotide sequence ID" value="NM_001127126.1"/>
</dbReference>
<dbReference type="SMR" id="B1WB65"/>
<dbReference type="FunCoup" id="B1WB65">
    <property type="interactions" value="495"/>
</dbReference>
<dbReference type="STRING" id="8364.ENSXETP00000020153"/>
<dbReference type="PaxDb" id="8364-ENSXETP00000044780"/>
<dbReference type="GeneID" id="100145755"/>
<dbReference type="KEGG" id="xtr:100145755"/>
<dbReference type="AGR" id="Xenbase:XB-GENE-1009257"/>
<dbReference type="CTD" id="57530"/>
<dbReference type="Xenbase" id="XB-GENE-1009257">
    <property type="gene designation" value="cgn"/>
</dbReference>
<dbReference type="eggNOG" id="ENOG502R9EI">
    <property type="taxonomic scope" value="Eukaryota"/>
</dbReference>
<dbReference type="InParanoid" id="B1WB65"/>
<dbReference type="OrthoDB" id="6108017at2759"/>
<dbReference type="Reactome" id="R-XTR-2173791">
    <property type="pathway name" value="TGF-beta receptor signaling in EMT (epithelial to mesenchymal transition)"/>
</dbReference>
<dbReference type="Proteomes" id="UP000008143">
    <property type="component" value="Chromosome 8"/>
</dbReference>
<dbReference type="GO" id="GO:0005923">
    <property type="term" value="C:bicellular tight junction"/>
    <property type="evidence" value="ECO:0007669"/>
    <property type="project" value="UniProtKB-SubCell"/>
</dbReference>
<dbReference type="GO" id="GO:0016459">
    <property type="term" value="C:myosin complex"/>
    <property type="evidence" value="ECO:0007669"/>
    <property type="project" value="InterPro"/>
</dbReference>
<dbReference type="InterPro" id="IPR002928">
    <property type="entry name" value="Myosin_tail"/>
</dbReference>
<dbReference type="PANTHER" id="PTHR46349">
    <property type="entry name" value="CINGULIN-LIKE PROTEIN 1-RELATED"/>
    <property type="match status" value="1"/>
</dbReference>
<dbReference type="PANTHER" id="PTHR46349:SF6">
    <property type="entry name" value="MYOSIN-6-LIKE"/>
    <property type="match status" value="1"/>
</dbReference>
<dbReference type="Pfam" id="PF01576">
    <property type="entry name" value="Myosin_tail_1"/>
    <property type="match status" value="2"/>
</dbReference>
<keyword id="KW-0965">Cell junction</keyword>
<keyword id="KW-0175">Coiled coil</keyword>
<keyword id="KW-1185">Reference proteome</keyword>
<keyword id="KW-0796">Tight junction</keyword>
<proteinExistence type="evidence at transcript level"/>
<name>CING_XENTR</name>
<comment type="function">
    <text evidence="1">Probably plays a role in the formation and regulation of the tight junction (TJ) paracellular permeability barrier, possibly by linking ZO proteins to the actomyosin cytoskeleton.</text>
</comment>
<comment type="subunit">
    <text evidence="4">Parallel homodimer (By similarity). Interacts with TJP1/ZO1 and TJP2/ZO2 (By similarity).</text>
</comment>
<comment type="subcellular location">
    <subcellularLocation>
        <location evidence="2">Cell junction</location>
        <location evidence="2">Tight junction</location>
    </subcellularLocation>
    <text evidence="2">Localizes to the apical junction complex composed of tight and adherens junctions.</text>
</comment>
<comment type="domain">
    <text evidence="1">Deletion of the TJP1/ZO1 interaction motif (ZIM) decreases but does not abolish colocalization with TJP1/ZO1.</text>
</comment>
<comment type="similarity">
    <text evidence="7">Belongs to the cingulin family.</text>
</comment>
<comment type="caution">
    <text evidence="7">It is uncertain whether Met-1 or Met-9 is the initiator.</text>
</comment>
<comment type="sequence caution" evidence="7">
    <conflict type="erroneous initiation">
        <sequence resource="EMBL-CDS" id="AAI61633"/>
    </conflict>
    <text>Truncated N-terminus.</text>
</comment>
<feature type="chain" id="PRO_0000371434" description="Cingulin">
    <location>
        <begin position="1"/>
        <end position="1259"/>
    </location>
</feature>
<feature type="region of interest" description="Head" evidence="1">
    <location>
        <begin position="9"/>
        <end position="324"/>
    </location>
</feature>
<feature type="region of interest" description="Disordered" evidence="6">
    <location>
        <begin position="69"/>
        <end position="151"/>
    </location>
</feature>
<feature type="region of interest" description="Disordered" evidence="6">
    <location>
        <begin position="169"/>
        <end position="232"/>
    </location>
</feature>
<feature type="region of interest" description="Disordered" evidence="6">
    <location>
        <begin position="317"/>
        <end position="338"/>
    </location>
</feature>
<feature type="region of interest" description="Disordered" evidence="6">
    <location>
        <begin position="941"/>
        <end position="969"/>
    </location>
</feature>
<feature type="region of interest" description="Disordered" evidence="6">
    <location>
        <begin position="1192"/>
        <end position="1259"/>
    </location>
</feature>
<feature type="region of interest" description="Tail" evidence="1">
    <location>
        <begin position="1220"/>
        <end position="1259"/>
    </location>
</feature>
<feature type="coiled-coil region" evidence="5">
    <location>
        <begin position="325"/>
        <end position="1218"/>
    </location>
</feature>
<feature type="short sequence motif" description="ZIM">
    <location>
        <begin position="41"/>
        <end position="55"/>
    </location>
</feature>
<feature type="compositionally biased region" description="Basic and acidic residues" evidence="6">
    <location>
        <begin position="69"/>
        <end position="79"/>
    </location>
</feature>
<feature type="compositionally biased region" description="Polar residues" evidence="6">
    <location>
        <begin position="80"/>
        <end position="100"/>
    </location>
</feature>
<feature type="compositionally biased region" description="Low complexity" evidence="6">
    <location>
        <begin position="117"/>
        <end position="127"/>
    </location>
</feature>
<feature type="compositionally biased region" description="Polar residues" evidence="6">
    <location>
        <begin position="128"/>
        <end position="145"/>
    </location>
</feature>
<feature type="compositionally biased region" description="Basic and acidic residues" evidence="6">
    <location>
        <begin position="179"/>
        <end position="204"/>
    </location>
</feature>
<feature type="compositionally biased region" description="Polar residues" evidence="6">
    <location>
        <begin position="220"/>
        <end position="229"/>
    </location>
</feature>
<feature type="compositionally biased region" description="Basic and acidic residues" evidence="6">
    <location>
        <begin position="326"/>
        <end position="338"/>
    </location>
</feature>
<feature type="compositionally biased region" description="Polar residues" evidence="6">
    <location>
        <begin position="1241"/>
        <end position="1259"/>
    </location>
</feature>
<reference key="1">
    <citation type="submission" date="2008-04" db="EMBL/GenBank/DDBJ databases">
        <authorList>
            <consortium name="NIH - Xenopus Gene Collection (XGC) project"/>
        </authorList>
    </citation>
    <scope>NUCLEOTIDE SEQUENCE [LARGE SCALE MRNA]</scope>
    <source>
        <tissue>Testis</tissue>
    </source>
</reference>